<feature type="chain" id="PRO_0000381650" description="Biotin synthase">
    <location>
        <begin position="1"/>
        <end position="335"/>
    </location>
</feature>
<feature type="domain" description="Radical SAM core" evidence="2">
    <location>
        <begin position="43"/>
        <end position="269"/>
    </location>
</feature>
<feature type="binding site" evidence="1">
    <location>
        <position position="61"/>
    </location>
    <ligand>
        <name>[4Fe-4S] cluster</name>
        <dbReference type="ChEBI" id="CHEBI:49883"/>
        <note>4Fe-4S-S-AdoMet</note>
    </ligand>
</feature>
<feature type="binding site" evidence="1">
    <location>
        <position position="65"/>
    </location>
    <ligand>
        <name>[4Fe-4S] cluster</name>
        <dbReference type="ChEBI" id="CHEBI:49883"/>
        <note>4Fe-4S-S-AdoMet</note>
    </ligand>
</feature>
<feature type="binding site" evidence="1">
    <location>
        <position position="68"/>
    </location>
    <ligand>
        <name>[4Fe-4S] cluster</name>
        <dbReference type="ChEBI" id="CHEBI:49883"/>
        <note>4Fe-4S-S-AdoMet</note>
    </ligand>
</feature>
<feature type="binding site" evidence="1">
    <location>
        <position position="104"/>
    </location>
    <ligand>
        <name>[2Fe-2S] cluster</name>
        <dbReference type="ChEBI" id="CHEBI:190135"/>
    </ligand>
</feature>
<feature type="binding site" evidence="1">
    <location>
        <position position="137"/>
    </location>
    <ligand>
        <name>[2Fe-2S] cluster</name>
        <dbReference type="ChEBI" id="CHEBI:190135"/>
    </ligand>
</feature>
<feature type="binding site" evidence="1">
    <location>
        <position position="197"/>
    </location>
    <ligand>
        <name>[2Fe-2S] cluster</name>
        <dbReference type="ChEBI" id="CHEBI:190135"/>
    </ligand>
</feature>
<feature type="binding site" evidence="1">
    <location>
        <position position="267"/>
    </location>
    <ligand>
        <name>[2Fe-2S] cluster</name>
        <dbReference type="ChEBI" id="CHEBI:190135"/>
    </ligand>
</feature>
<keyword id="KW-0001">2Fe-2S</keyword>
<keyword id="KW-0004">4Fe-4S</keyword>
<keyword id="KW-0093">Biotin biosynthesis</keyword>
<keyword id="KW-0408">Iron</keyword>
<keyword id="KW-0411">Iron-sulfur</keyword>
<keyword id="KW-0479">Metal-binding</keyword>
<keyword id="KW-0949">S-adenosyl-L-methionine</keyword>
<keyword id="KW-0808">Transferase</keyword>
<dbReference type="EC" id="2.8.1.6" evidence="1"/>
<dbReference type="EMBL" id="BA000017">
    <property type="protein sequence ID" value="BAB58587.1"/>
    <property type="molecule type" value="Genomic_DNA"/>
</dbReference>
<dbReference type="RefSeq" id="WP_001046645.1">
    <property type="nucleotide sequence ID" value="NC_002758.2"/>
</dbReference>
<dbReference type="SMR" id="Q99RK7"/>
<dbReference type="DNASU" id="1122450"/>
<dbReference type="KEGG" id="sav:SAV2425"/>
<dbReference type="HOGENOM" id="CLU_033172_2_1_9"/>
<dbReference type="PhylomeDB" id="Q99RK7"/>
<dbReference type="UniPathway" id="UPA00078">
    <property type="reaction ID" value="UER00162"/>
</dbReference>
<dbReference type="Proteomes" id="UP000002481">
    <property type="component" value="Chromosome"/>
</dbReference>
<dbReference type="GO" id="GO:0051537">
    <property type="term" value="F:2 iron, 2 sulfur cluster binding"/>
    <property type="evidence" value="ECO:0007669"/>
    <property type="project" value="UniProtKB-KW"/>
</dbReference>
<dbReference type="GO" id="GO:0051539">
    <property type="term" value="F:4 iron, 4 sulfur cluster binding"/>
    <property type="evidence" value="ECO:0007669"/>
    <property type="project" value="UniProtKB-KW"/>
</dbReference>
<dbReference type="GO" id="GO:0004076">
    <property type="term" value="F:biotin synthase activity"/>
    <property type="evidence" value="ECO:0007669"/>
    <property type="project" value="UniProtKB-UniRule"/>
</dbReference>
<dbReference type="GO" id="GO:0005506">
    <property type="term" value="F:iron ion binding"/>
    <property type="evidence" value="ECO:0007669"/>
    <property type="project" value="UniProtKB-UniRule"/>
</dbReference>
<dbReference type="GO" id="GO:0009102">
    <property type="term" value="P:biotin biosynthetic process"/>
    <property type="evidence" value="ECO:0007669"/>
    <property type="project" value="UniProtKB-UniRule"/>
</dbReference>
<dbReference type="CDD" id="cd01335">
    <property type="entry name" value="Radical_SAM"/>
    <property type="match status" value="1"/>
</dbReference>
<dbReference type="FunFam" id="3.20.20.70:FF:000026">
    <property type="entry name" value="Biotin synthase"/>
    <property type="match status" value="1"/>
</dbReference>
<dbReference type="Gene3D" id="3.20.20.70">
    <property type="entry name" value="Aldolase class I"/>
    <property type="match status" value="1"/>
</dbReference>
<dbReference type="HAMAP" id="MF_01694">
    <property type="entry name" value="BioB"/>
    <property type="match status" value="1"/>
</dbReference>
<dbReference type="InterPro" id="IPR013785">
    <property type="entry name" value="Aldolase_TIM"/>
</dbReference>
<dbReference type="InterPro" id="IPR010722">
    <property type="entry name" value="BATS_dom"/>
</dbReference>
<dbReference type="InterPro" id="IPR002684">
    <property type="entry name" value="Biotin_synth/BioAB"/>
</dbReference>
<dbReference type="InterPro" id="IPR024177">
    <property type="entry name" value="Biotin_synthase"/>
</dbReference>
<dbReference type="InterPro" id="IPR006638">
    <property type="entry name" value="Elp3/MiaA/NifB-like_rSAM"/>
</dbReference>
<dbReference type="InterPro" id="IPR007197">
    <property type="entry name" value="rSAM"/>
</dbReference>
<dbReference type="NCBIfam" id="TIGR00433">
    <property type="entry name" value="bioB"/>
    <property type="match status" value="1"/>
</dbReference>
<dbReference type="PANTHER" id="PTHR22976">
    <property type="entry name" value="BIOTIN SYNTHASE"/>
    <property type="match status" value="1"/>
</dbReference>
<dbReference type="PANTHER" id="PTHR22976:SF2">
    <property type="entry name" value="BIOTIN SYNTHASE, MITOCHONDRIAL"/>
    <property type="match status" value="1"/>
</dbReference>
<dbReference type="Pfam" id="PF06968">
    <property type="entry name" value="BATS"/>
    <property type="match status" value="1"/>
</dbReference>
<dbReference type="Pfam" id="PF04055">
    <property type="entry name" value="Radical_SAM"/>
    <property type="match status" value="1"/>
</dbReference>
<dbReference type="PIRSF" id="PIRSF001619">
    <property type="entry name" value="Biotin_synth"/>
    <property type="match status" value="1"/>
</dbReference>
<dbReference type="SFLD" id="SFLDG01060">
    <property type="entry name" value="BATS_domain_containing"/>
    <property type="match status" value="1"/>
</dbReference>
<dbReference type="SFLD" id="SFLDG01278">
    <property type="entry name" value="biotin_synthase_like"/>
    <property type="match status" value="1"/>
</dbReference>
<dbReference type="SMART" id="SM00876">
    <property type="entry name" value="BATS"/>
    <property type="match status" value="1"/>
</dbReference>
<dbReference type="SMART" id="SM00729">
    <property type="entry name" value="Elp3"/>
    <property type="match status" value="1"/>
</dbReference>
<dbReference type="SUPFAM" id="SSF102114">
    <property type="entry name" value="Radical SAM enzymes"/>
    <property type="match status" value="1"/>
</dbReference>
<dbReference type="PROSITE" id="PS51918">
    <property type="entry name" value="RADICAL_SAM"/>
    <property type="match status" value="1"/>
</dbReference>
<name>BIOB_STAAM</name>
<accession>Q99RK7</accession>
<evidence type="ECO:0000255" key="1">
    <source>
        <dbReference type="HAMAP-Rule" id="MF_01694"/>
    </source>
</evidence>
<evidence type="ECO:0000255" key="2">
    <source>
        <dbReference type="PROSITE-ProRule" id="PRU01266"/>
    </source>
</evidence>
<reference key="1">
    <citation type="journal article" date="2001" name="Lancet">
        <title>Whole genome sequencing of meticillin-resistant Staphylococcus aureus.</title>
        <authorList>
            <person name="Kuroda M."/>
            <person name="Ohta T."/>
            <person name="Uchiyama I."/>
            <person name="Baba T."/>
            <person name="Yuzawa H."/>
            <person name="Kobayashi I."/>
            <person name="Cui L."/>
            <person name="Oguchi A."/>
            <person name="Aoki K."/>
            <person name="Nagai Y."/>
            <person name="Lian J.-Q."/>
            <person name="Ito T."/>
            <person name="Kanamori M."/>
            <person name="Matsumaru H."/>
            <person name="Maruyama A."/>
            <person name="Murakami H."/>
            <person name="Hosoyama A."/>
            <person name="Mizutani-Ui Y."/>
            <person name="Takahashi N.K."/>
            <person name="Sawano T."/>
            <person name="Inoue R."/>
            <person name="Kaito C."/>
            <person name="Sekimizu K."/>
            <person name="Hirakawa H."/>
            <person name="Kuhara S."/>
            <person name="Goto S."/>
            <person name="Yabuzaki J."/>
            <person name="Kanehisa M."/>
            <person name="Yamashita A."/>
            <person name="Oshima K."/>
            <person name="Furuya K."/>
            <person name="Yoshino C."/>
            <person name="Shiba T."/>
            <person name="Hattori M."/>
            <person name="Ogasawara N."/>
            <person name="Hayashi H."/>
            <person name="Hiramatsu K."/>
        </authorList>
    </citation>
    <scope>NUCLEOTIDE SEQUENCE [LARGE SCALE GENOMIC DNA]</scope>
    <source>
        <strain>Mu50 / ATCC 700699</strain>
    </source>
</reference>
<gene>
    <name evidence="1" type="primary">bioB</name>
    <name type="ordered locus">SAV2425</name>
</gene>
<proteinExistence type="inferred from homology"/>
<protein>
    <recommendedName>
        <fullName evidence="1">Biotin synthase</fullName>
        <ecNumber evidence="1">2.8.1.6</ecNumber>
    </recommendedName>
</protein>
<sequence>MNLAKRILQGEQLTKETVLKIYEDTNIDTLDLLNEAYILRKHYFGKKVKLNMILNAKSGICPENCGYCGQSRDIKQKQRYALIPEEQIIDGAKVAHDNHIGTYCIVMSGRGPSDKEVDHISNTVRTIKSQHPQLKICACLGLTNDEQAKKLKSAGVDRYNHNINTSENYHDNVVTTHSYKDRTDTIELMKANNISPCSGVICGMGESNQDIVDMAFALKEMDADSIPINFLHPIKGTKFGSMDDLTPMKCLRIVALFRLINPTKEIRIAGGREVNLRSLQPLALKAANSIFVGDYLITGGQPNQLDYDMINDLGFEIDYDTCENKENKNDVSRAN</sequence>
<organism>
    <name type="scientific">Staphylococcus aureus (strain Mu50 / ATCC 700699)</name>
    <dbReference type="NCBI Taxonomy" id="158878"/>
    <lineage>
        <taxon>Bacteria</taxon>
        <taxon>Bacillati</taxon>
        <taxon>Bacillota</taxon>
        <taxon>Bacilli</taxon>
        <taxon>Bacillales</taxon>
        <taxon>Staphylococcaceae</taxon>
        <taxon>Staphylococcus</taxon>
    </lineage>
</organism>
<comment type="function">
    <text evidence="1">Catalyzes the conversion of dethiobiotin (DTB) to biotin by the insertion of a sulfur atom into dethiobiotin via a radical-based mechanism.</text>
</comment>
<comment type="catalytic activity">
    <reaction evidence="1">
        <text>(4R,5S)-dethiobiotin + (sulfur carrier)-SH + 2 reduced [2Fe-2S]-[ferredoxin] + 2 S-adenosyl-L-methionine = (sulfur carrier)-H + biotin + 2 5'-deoxyadenosine + 2 L-methionine + 2 oxidized [2Fe-2S]-[ferredoxin]</text>
        <dbReference type="Rhea" id="RHEA:22060"/>
        <dbReference type="Rhea" id="RHEA-COMP:10000"/>
        <dbReference type="Rhea" id="RHEA-COMP:10001"/>
        <dbReference type="Rhea" id="RHEA-COMP:14737"/>
        <dbReference type="Rhea" id="RHEA-COMP:14739"/>
        <dbReference type="ChEBI" id="CHEBI:17319"/>
        <dbReference type="ChEBI" id="CHEBI:29917"/>
        <dbReference type="ChEBI" id="CHEBI:33737"/>
        <dbReference type="ChEBI" id="CHEBI:33738"/>
        <dbReference type="ChEBI" id="CHEBI:57586"/>
        <dbReference type="ChEBI" id="CHEBI:57844"/>
        <dbReference type="ChEBI" id="CHEBI:59789"/>
        <dbReference type="ChEBI" id="CHEBI:64428"/>
        <dbReference type="ChEBI" id="CHEBI:149473"/>
        <dbReference type="EC" id="2.8.1.6"/>
    </reaction>
</comment>
<comment type="cofactor">
    <cofactor evidence="1">
        <name>[4Fe-4S] cluster</name>
        <dbReference type="ChEBI" id="CHEBI:49883"/>
    </cofactor>
    <text evidence="1">Binds 1 [4Fe-4S] cluster. The cluster is coordinated with 3 cysteines and an exchangeable S-adenosyl-L-methionine.</text>
</comment>
<comment type="cofactor">
    <cofactor evidence="1">
        <name>[2Fe-2S] cluster</name>
        <dbReference type="ChEBI" id="CHEBI:190135"/>
    </cofactor>
    <text evidence="1">Binds 1 [2Fe-2S] cluster. The cluster is coordinated with 3 cysteines and 1 arginine.</text>
</comment>
<comment type="pathway">
    <text evidence="1">Cofactor biosynthesis; biotin biosynthesis; biotin from 7,8-diaminononanoate: step 2/2.</text>
</comment>
<comment type="subunit">
    <text evidence="1">Homodimer.</text>
</comment>
<comment type="similarity">
    <text evidence="1">Belongs to the radical SAM superfamily. Biotin synthase family.</text>
</comment>